<protein>
    <recommendedName>
        <fullName>Uncharacterized protein MJ1637</fullName>
    </recommendedName>
</protein>
<feature type="signal peptide" evidence="1">
    <location>
        <begin position="1"/>
        <end position="19"/>
    </location>
</feature>
<feature type="chain" id="PRO_0000014019" description="Uncharacterized protein MJ1637">
    <location>
        <begin position="20"/>
        <end position="473"/>
    </location>
</feature>
<sequence length="473" mass="55322">MIRAFLVFPYLYILVQSNGYTGGIMVQLNDYILNHIAKTPLILSRYNKEKKRFDYDILKEKVDKYIENDKKELILLYGLRGLGKTTLLSQIYHYARLKIEPNRVLYFSMDELKLNDIKLMDALKAYSEIFGINLYEEKIILLLDEIQYERHWDLVLKNLYDTTNIFIIATGSSALKLRESPDLARRALHKPIYPMTFREYLYLTKNIKIESLFEEVILNNNLDNFKKVYAKVYSQILEEDVKKYLRIGSLPFALEDDELEVYNKIYTMLERIIYKDVREVKEFDMETLDKAFKLLYLLANPKGERYSYESLANTLEIAKGTLINLVDVLEKCELLFKIYPYGSMDKKVRKSQKIKFLPVPIKTALWHKMGVVIDDVCYGSLLEDVVAFYLYLFCKKKGYSLSYEPKKGGADFILISPYMEKIVIEVGLGKKSSKQVLKSMERVKASKGIIIGDELKVEGNILYIPWKGFLLLI</sequence>
<gene>
    <name type="ordered locus">MJ1637</name>
</gene>
<proteinExistence type="inferred from homology"/>
<reference key="1">
    <citation type="journal article" date="1996" name="Science">
        <title>Complete genome sequence of the methanogenic archaeon, Methanococcus jannaschii.</title>
        <authorList>
            <person name="Bult C.J."/>
            <person name="White O."/>
            <person name="Olsen G.J."/>
            <person name="Zhou L."/>
            <person name="Fleischmann R.D."/>
            <person name="Sutton G.G."/>
            <person name="Blake J.A."/>
            <person name="FitzGerald L.M."/>
            <person name="Clayton R.A."/>
            <person name="Gocayne J.D."/>
            <person name="Kerlavage A.R."/>
            <person name="Dougherty B.A."/>
            <person name="Tomb J.-F."/>
            <person name="Adams M.D."/>
            <person name="Reich C.I."/>
            <person name="Overbeek R."/>
            <person name="Kirkness E.F."/>
            <person name="Weinstock K.G."/>
            <person name="Merrick J.M."/>
            <person name="Glodek A."/>
            <person name="Scott J.L."/>
            <person name="Geoghagen N.S.M."/>
            <person name="Weidman J.F."/>
            <person name="Fuhrmann J.L."/>
            <person name="Nguyen D."/>
            <person name="Utterback T.R."/>
            <person name="Kelley J.M."/>
            <person name="Peterson J.D."/>
            <person name="Sadow P.W."/>
            <person name="Hanna M.C."/>
            <person name="Cotton M.D."/>
            <person name="Roberts K.M."/>
            <person name="Hurst M.A."/>
            <person name="Kaine B.P."/>
            <person name="Borodovsky M."/>
            <person name="Klenk H.-P."/>
            <person name="Fraser C.M."/>
            <person name="Smith H.O."/>
            <person name="Woese C.R."/>
            <person name="Venter J.C."/>
        </authorList>
    </citation>
    <scope>NUCLEOTIDE SEQUENCE [LARGE SCALE GENOMIC DNA]</scope>
    <source>
        <strain>ATCC 43067 / DSM 2661 / JAL-1 / JCM 10045 / NBRC 100440</strain>
    </source>
</reference>
<dbReference type="EMBL" id="L77117">
    <property type="protein sequence ID" value="AAB99658.1"/>
    <property type="molecule type" value="Genomic_DNA"/>
</dbReference>
<dbReference type="PIR" id="C64504">
    <property type="entry name" value="C64504"/>
</dbReference>
<dbReference type="STRING" id="243232.MJ_1637"/>
<dbReference type="PaxDb" id="243232-MJ_1637"/>
<dbReference type="DNASU" id="1452546"/>
<dbReference type="EnsemblBacteria" id="AAB99658">
    <property type="protein sequence ID" value="AAB99658"/>
    <property type="gene ID" value="MJ_1637"/>
</dbReference>
<dbReference type="KEGG" id="mja:MJ_1637"/>
<dbReference type="eggNOG" id="arCOG03167">
    <property type="taxonomic scope" value="Archaea"/>
</dbReference>
<dbReference type="HOGENOM" id="CLU_044680_0_0_2"/>
<dbReference type="InParanoid" id="Q59031"/>
<dbReference type="OrthoDB" id="358600at2157"/>
<dbReference type="PhylomeDB" id="Q59031"/>
<dbReference type="Proteomes" id="UP000000805">
    <property type="component" value="Chromosome"/>
</dbReference>
<dbReference type="GO" id="GO:0016887">
    <property type="term" value="F:ATP hydrolysis activity"/>
    <property type="evidence" value="ECO:0007669"/>
    <property type="project" value="InterPro"/>
</dbReference>
<dbReference type="CDD" id="cd00009">
    <property type="entry name" value="AAA"/>
    <property type="match status" value="1"/>
</dbReference>
<dbReference type="Gene3D" id="3.40.50.300">
    <property type="entry name" value="P-loop containing nucleotide triphosphate hydrolases"/>
    <property type="match status" value="1"/>
</dbReference>
<dbReference type="InterPro" id="IPR003593">
    <property type="entry name" value="AAA+_ATPase"/>
</dbReference>
<dbReference type="InterPro" id="IPR041682">
    <property type="entry name" value="AAA_14"/>
</dbReference>
<dbReference type="InterPro" id="IPR025420">
    <property type="entry name" value="DUF4143"/>
</dbReference>
<dbReference type="InterPro" id="IPR027417">
    <property type="entry name" value="P-loop_NTPase"/>
</dbReference>
<dbReference type="PANTHER" id="PTHR42990:SF1">
    <property type="entry name" value="AAA+ ATPASE DOMAIN-CONTAINING PROTEIN"/>
    <property type="match status" value="1"/>
</dbReference>
<dbReference type="PANTHER" id="PTHR42990">
    <property type="entry name" value="ATPASE"/>
    <property type="match status" value="1"/>
</dbReference>
<dbReference type="Pfam" id="PF13173">
    <property type="entry name" value="AAA_14"/>
    <property type="match status" value="1"/>
</dbReference>
<dbReference type="Pfam" id="PF13635">
    <property type="entry name" value="DUF4143"/>
    <property type="match status" value="1"/>
</dbReference>
<dbReference type="PRINTS" id="PR00364">
    <property type="entry name" value="DISEASERSIST"/>
</dbReference>
<dbReference type="SMART" id="SM00382">
    <property type="entry name" value="AAA"/>
    <property type="match status" value="1"/>
</dbReference>
<dbReference type="SUPFAM" id="SSF52540">
    <property type="entry name" value="P-loop containing nucleoside triphosphate hydrolases"/>
    <property type="match status" value="1"/>
</dbReference>
<name>Y1637_METJA</name>
<organism>
    <name type="scientific">Methanocaldococcus jannaschii (strain ATCC 43067 / DSM 2661 / JAL-1 / JCM 10045 / NBRC 100440)</name>
    <name type="common">Methanococcus jannaschii</name>
    <dbReference type="NCBI Taxonomy" id="243232"/>
    <lineage>
        <taxon>Archaea</taxon>
        <taxon>Methanobacteriati</taxon>
        <taxon>Methanobacteriota</taxon>
        <taxon>Methanomada group</taxon>
        <taxon>Methanococci</taxon>
        <taxon>Methanococcales</taxon>
        <taxon>Methanocaldococcaceae</taxon>
        <taxon>Methanocaldococcus</taxon>
    </lineage>
</organism>
<accession>Q59031</accession>
<evidence type="ECO:0000255" key="1"/>
<keyword id="KW-1185">Reference proteome</keyword>
<keyword id="KW-0732">Signal</keyword>